<dbReference type="EMBL" id="CP001230">
    <property type="protein sequence ID" value="ACO03660.1"/>
    <property type="molecule type" value="Genomic_DNA"/>
</dbReference>
<dbReference type="RefSeq" id="WP_012675899.1">
    <property type="nucleotide sequence ID" value="NC_012440.1"/>
</dbReference>
<dbReference type="SMR" id="C0QTB8"/>
<dbReference type="STRING" id="123214.PERMA_0135"/>
<dbReference type="PaxDb" id="123214-PERMA_0135"/>
<dbReference type="KEGG" id="pmx:PERMA_0135"/>
<dbReference type="eggNOG" id="COG0828">
    <property type="taxonomic scope" value="Bacteria"/>
</dbReference>
<dbReference type="HOGENOM" id="CLU_159258_1_2_0"/>
<dbReference type="OrthoDB" id="9799244at2"/>
<dbReference type="Proteomes" id="UP000001366">
    <property type="component" value="Chromosome"/>
</dbReference>
<dbReference type="GO" id="GO:1990904">
    <property type="term" value="C:ribonucleoprotein complex"/>
    <property type="evidence" value="ECO:0007669"/>
    <property type="project" value="UniProtKB-KW"/>
</dbReference>
<dbReference type="GO" id="GO:0005840">
    <property type="term" value="C:ribosome"/>
    <property type="evidence" value="ECO:0007669"/>
    <property type="project" value="UniProtKB-KW"/>
</dbReference>
<dbReference type="GO" id="GO:0003735">
    <property type="term" value="F:structural constituent of ribosome"/>
    <property type="evidence" value="ECO:0007669"/>
    <property type="project" value="InterPro"/>
</dbReference>
<dbReference type="GO" id="GO:0006412">
    <property type="term" value="P:translation"/>
    <property type="evidence" value="ECO:0007669"/>
    <property type="project" value="UniProtKB-UniRule"/>
</dbReference>
<dbReference type="Gene3D" id="1.20.5.1150">
    <property type="entry name" value="Ribosomal protein S8"/>
    <property type="match status" value="1"/>
</dbReference>
<dbReference type="HAMAP" id="MF_00358">
    <property type="entry name" value="Ribosomal_bS21"/>
    <property type="match status" value="1"/>
</dbReference>
<dbReference type="InterPro" id="IPR001911">
    <property type="entry name" value="Ribosomal_bS21"/>
</dbReference>
<dbReference type="InterPro" id="IPR018278">
    <property type="entry name" value="Ribosomal_bS21_CS"/>
</dbReference>
<dbReference type="InterPro" id="IPR038380">
    <property type="entry name" value="Ribosomal_bS21_sf"/>
</dbReference>
<dbReference type="NCBIfam" id="TIGR00030">
    <property type="entry name" value="S21p"/>
    <property type="match status" value="1"/>
</dbReference>
<dbReference type="PANTHER" id="PTHR21109">
    <property type="entry name" value="MITOCHONDRIAL 28S RIBOSOMAL PROTEIN S21"/>
    <property type="match status" value="1"/>
</dbReference>
<dbReference type="PANTHER" id="PTHR21109:SF22">
    <property type="entry name" value="SMALL RIBOSOMAL SUBUNIT PROTEIN BS21"/>
    <property type="match status" value="1"/>
</dbReference>
<dbReference type="Pfam" id="PF01165">
    <property type="entry name" value="Ribosomal_S21"/>
    <property type="match status" value="1"/>
</dbReference>
<dbReference type="PRINTS" id="PR00976">
    <property type="entry name" value="RIBOSOMALS21"/>
</dbReference>
<dbReference type="PROSITE" id="PS01181">
    <property type="entry name" value="RIBOSOMAL_S21"/>
    <property type="match status" value="1"/>
</dbReference>
<name>RS21_PERMH</name>
<keyword id="KW-1185">Reference proteome</keyword>
<keyword id="KW-0687">Ribonucleoprotein</keyword>
<keyword id="KW-0689">Ribosomal protein</keyword>
<evidence type="ECO:0000255" key="1">
    <source>
        <dbReference type="HAMAP-Rule" id="MF_00358"/>
    </source>
</evidence>
<evidence type="ECO:0000305" key="2"/>
<sequence>MAVVVVQEGESFEKALKRFKKICEKEGIITEMKRREFYEKPSVKRKRKQRAARKRLIKALKKKGLL</sequence>
<organism>
    <name type="scientific">Persephonella marina (strain DSM 14350 / EX-H1)</name>
    <dbReference type="NCBI Taxonomy" id="123214"/>
    <lineage>
        <taxon>Bacteria</taxon>
        <taxon>Pseudomonadati</taxon>
        <taxon>Aquificota</taxon>
        <taxon>Aquificia</taxon>
        <taxon>Aquificales</taxon>
        <taxon>Hydrogenothermaceae</taxon>
        <taxon>Persephonella</taxon>
    </lineage>
</organism>
<reference key="1">
    <citation type="journal article" date="2009" name="J. Bacteriol.">
        <title>Complete and draft genome sequences of six members of the Aquificales.</title>
        <authorList>
            <person name="Reysenbach A.-L."/>
            <person name="Hamamura N."/>
            <person name="Podar M."/>
            <person name="Griffiths E."/>
            <person name="Ferreira S."/>
            <person name="Hochstein R."/>
            <person name="Heidelberg J."/>
            <person name="Johnson J."/>
            <person name="Mead D."/>
            <person name="Pohorille A."/>
            <person name="Sarmiento M."/>
            <person name="Schweighofer K."/>
            <person name="Seshadri R."/>
            <person name="Voytek M.A."/>
        </authorList>
    </citation>
    <scope>NUCLEOTIDE SEQUENCE [LARGE SCALE GENOMIC DNA]</scope>
    <source>
        <strain>DSM 14350 / EX-H1</strain>
    </source>
</reference>
<gene>
    <name evidence="1" type="primary">rpsU</name>
    <name type="ordered locus">PERMA_0135</name>
</gene>
<comment type="similarity">
    <text evidence="1">Belongs to the bacterial ribosomal protein bS21 family.</text>
</comment>
<proteinExistence type="inferred from homology"/>
<accession>C0QTB8</accession>
<feature type="chain" id="PRO_1000133483" description="Small ribosomal subunit protein bS21">
    <location>
        <begin position="1"/>
        <end position="66"/>
    </location>
</feature>
<protein>
    <recommendedName>
        <fullName evidence="1">Small ribosomal subunit protein bS21</fullName>
    </recommendedName>
    <alternativeName>
        <fullName evidence="2">30S ribosomal protein S21</fullName>
    </alternativeName>
</protein>